<name>RL21_CORA7</name>
<evidence type="ECO:0000255" key="1">
    <source>
        <dbReference type="HAMAP-Rule" id="MF_01363"/>
    </source>
</evidence>
<evidence type="ECO:0000305" key="2"/>
<protein>
    <recommendedName>
        <fullName evidence="1">Large ribosomal subunit protein bL21</fullName>
    </recommendedName>
    <alternativeName>
        <fullName evidence="2">50S ribosomal protein L21</fullName>
    </alternativeName>
</protein>
<feature type="chain" id="PRO_1000166715" description="Large ribosomal subunit protein bL21">
    <location>
        <begin position="1"/>
        <end position="101"/>
    </location>
</feature>
<dbReference type="EMBL" id="CP001601">
    <property type="protein sequence ID" value="ACP33459.1"/>
    <property type="molecule type" value="Genomic_DNA"/>
</dbReference>
<dbReference type="RefSeq" id="WP_010190885.1">
    <property type="nucleotide sequence ID" value="NZ_ACLH01000093.1"/>
</dbReference>
<dbReference type="SMR" id="C3PI05"/>
<dbReference type="STRING" id="548476.cauri_1866"/>
<dbReference type="GeneID" id="70782505"/>
<dbReference type="KEGG" id="car:cauri_1866"/>
<dbReference type="eggNOG" id="COG0261">
    <property type="taxonomic scope" value="Bacteria"/>
</dbReference>
<dbReference type="HOGENOM" id="CLU_061463_3_2_11"/>
<dbReference type="OrthoDB" id="9813334at2"/>
<dbReference type="Proteomes" id="UP000002077">
    <property type="component" value="Chromosome"/>
</dbReference>
<dbReference type="GO" id="GO:0005737">
    <property type="term" value="C:cytoplasm"/>
    <property type="evidence" value="ECO:0007669"/>
    <property type="project" value="UniProtKB-ARBA"/>
</dbReference>
<dbReference type="GO" id="GO:1990904">
    <property type="term" value="C:ribonucleoprotein complex"/>
    <property type="evidence" value="ECO:0007669"/>
    <property type="project" value="UniProtKB-KW"/>
</dbReference>
<dbReference type="GO" id="GO:0005840">
    <property type="term" value="C:ribosome"/>
    <property type="evidence" value="ECO:0007669"/>
    <property type="project" value="UniProtKB-KW"/>
</dbReference>
<dbReference type="GO" id="GO:0019843">
    <property type="term" value="F:rRNA binding"/>
    <property type="evidence" value="ECO:0007669"/>
    <property type="project" value="UniProtKB-UniRule"/>
</dbReference>
<dbReference type="GO" id="GO:0003735">
    <property type="term" value="F:structural constituent of ribosome"/>
    <property type="evidence" value="ECO:0007669"/>
    <property type="project" value="InterPro"/>
</dbReference>
<dbReference type="GO" id="GO:0006412">
    <property type="term" value="P:translation"/>
    <property type="evidence" value="ECO:0007669"/>
    <property type="project" value="UniProtKB-UniRule"/>
</dbReference>
<dbReference type="HAMAP" id="MF_01363">
    <property type="entry name" value="Ribosomal_bL21"/>
    <property type="match status" value="1"/>
</dbReference>
<dbReference type="InterPro" id="IPR028909">
    <property type="entry name" value="bL21-like"/>
</dbReference>
<dbReference type="InterPro" id="IPR036164">
    <property type="entry name" value="bL21-like_sf"/>
</dbReference>
<dbReference type="InterPro" id="IPR001787">
    <property type="entry name" value="Ribosomal_bL21"/>
</dbReference>
<dbReference type="InterPro" id="IPR018258">
    <property type="entry name" value="Ribosomal_bL21_CS"/>
</dbReference>
<dbReference type="NCBIfam" id="TIGR00061">
    <property type="entry name" value="L21"/>
    <property type="match status" value="1"/>
</dbReference>
<dbReference type="PANTHER" id="PTHR21349">
    <property type="entry name" value="50S RIBOSOMAL PROTEIN L21"/>
    <property type="match status" value="1"/>
</dbReference>
<dbReference type="PANTHER" id="PTHR21349:SF0">
    <property type="entry name" value="LARGE RIBOSOMAL SUBUNIT PROTEIN BL21M"/>
    <property type="match status" value="1"/>
</dbReference>
<dbReference type="Pfam" id="PF00829">
    <property type="entry name" value="Ribosomal_L21p"/>
    <property type="match status" value="1"/>
</dbReference>
<dbReference type="SUPFAM" id="SSF141091">
    <property type="entry name" value="L21p-like"/>
    <property type="match status" value="1"/>
</dbReference>
<dbReference type="PROSITE" id="PS01169">
    <property type="entry name" value="RIBOSOMAL_L21"/>
    <property type="match status" value="1"/>
</dbReference>
<keyword id="KW-1185">Reference proteome</keyword>
<keyword id="KW-0687">Ribonucleoprotein</keyword>
<keyword id="KW-0689">Ribosomal protein</keyword>
<keyword id="KW-0694">RNA-binding</keyword>
<keyword id="KW-0699">rRNA-binding</keyword>
<organism>
    <name type="scientific">Corynebacterium aurimucosum (strain ATCC 700975 / DSM 44827 / CIP 107346 / CN-1)</name>
    <name type="common">Corynebacterium nigricans</name>
    <dbReference type="NCBI Taxonomy" id="548476"/>
    <lineage>
        <taxon>Bacteria</taxon>
        <taxon>Bacillati</taxon>
        <taxon>Actinomycetota</taxon>
        <taxon>Actinomycetes</taxon>
        <taxon>Mycobacteriales</taxon>
        <taxon>Corynebacteriaceae</taxon>
        <taxon>Corynebacterium</taxon>
    </lineage>
</organism>
<reference key="1">
    <citation type="journal article" date="2010" name="BMC Genomics">
        <title>Complete genome sequence and lifestyle of black-pigmented Corynebacterium aurimucosum ATCC 700975 (formerly C. nigricans CN-1) isolated from a vaginal swab of a woman with spontaneous abortion.</title>
        <authorList>
            <person name="Trost E."/>
            <person name="Gotker S."/>
            <person name="Schneider J."/>
            <person name="Schneiker-Bekel S."/>
            <person name="Szczepanowski R."/>
            <person name="Tilker A."/>
            <person name="Viehoever P."/>
            <person name="Arnold W."/>
            <person name="Bekel T."/>
            <person name="Blom J."/>
            <person name="Gartemann K.H."/>
            <person name="Linke B."/>
            <person name="Goesmann A."/>
            <person name="Puhler A."/>
            <person name="Shukla S.K."/>
            <person name="Tauch A."/>
        </authorList>
    </citation>
    <scope>NUCLEOTIDE SEQUENCE [LARGE SCALE GENOMIC DNA]</scope>
    <source>
        <strain>ATCC 700975 / DSM 44827 / CIP 107346 / CN-1</strain>
    </source>
</reference>
<gene>
    <name evidence="1" type="primary">rplU</name>
    <name type="ordered locus">cauri_1866</name>
</gene>
<accession>C3PI05</accession>
<sequence length="101" mass="10865">MYAIVKTGGKQYKVAEGDLVKVEKIEGEPGSSVALTPVLLVDGATVKSKAADLEKVSVSAEIVEQGKGPKIDILKYKNKTGYKRRLGHRQPVTTLKITGIK</sequence>
<proteinExistence type="inferred from homology"/>
<comment type="function">
    <text evidence="1">This protein binds to 23S rRNA in the presence of protein L20.</text>
</comment>
<comment type="subunit">
    <text evidence="1">Part of the 50S ribosomal subunit. Contacts protein L20.</text>
</comment>
<comment type="similarity">
    <text evidence="1">Belongs to the bacterial ribosomal protein bL21 family.</text>
</comment>